<sequence length="395" mass="41246">MPLRSTFTRFFQLEAASGLLLIAAAILALIINNSPLSWLYNGLLDTPVVAQIGALKIAKPLLLWINDGLMALFFLLIGLEVKREVLDGQLSKPSQIVLPGAAAIGGMLVPALIYWFLNRDNPAALDGWAIPTATDIAFALGVLALLGKRVPVSLKLFLMTLAIIDDLGAIVIIAIFYSGELSTLSLGLAAACIAALVAMNRLGVVKLGPYMIIGLILWVCVLKSGVHATLAGVTLAFCIPLRTKNAEPSPLLTLEHALHPWVAYGILPLFAFANAGLSLSGVTVESFTHHVPMGIAVGLLLGKTLGVFGLTWLAVKTGIAALPQGANWGQVLGVAILCGIGFTMSLFVGSLAFVPGASEYAGMDRMGILTGSVFAALIGYAVTAAASRKNTALPS</sequence>
<comment type="function">
    <text evidence="1">Na(+)/H(+) antiporter that extrudes sodium in exchange for external protons.</text>
</comment>
<comment type="catalytic activity">
    <reaction evidence="1">
        <text>Na(+)(in) + 2 H(+)(out) = Na(+)(out) + 2 H(+)(in)</text>
        <dbReference type="Rhea" id="RHEA:29251"/>
        <dbReference type="ChEBI" id="CHEBI:15378"/>
        <dbReference type="ChEBI" id="CHEBI:29101"/>
    </reaction>
    <physiologicalReaction direction="left-to-right" evidence="1">
        <dbReference type="Rhea" id="RHEA:29252"/>
    </physiologicalReaction>
</comment>
<comment type="subcellular location">
    <subcellularLocation>
        <location evidence="1">Cell inner membrane</location>
        <topology evidence="1">Multi-pass membrane protein</topology>
    </subcellularLocation>
</comment>
<comment type="similarity">
    <text evidence="1">Belongs to the NhaA Na(+)/H(+) (TC 2.A.33) antiporter family.</text>
</comment>
<organism>
    <name type="scientific">Pseudomonas fluorescens (strain Pf0-1)</name>
    <dbReference type="NCBI Taxonomy" id="205922"/>
    <lineage>
        <taxon>Bacteria</taxon>
        <taxon>Pseudomonadati</taxon>
        <taxon>Pseudomonadota</taxon>
        <taxon>Gammaproteobacteria</taxon>
        <taxon>Pseudomonadales</taxon>
        <taxon>Pseudomonadaceae</taxon>
        <taxon>Pseudomonas</taxon>
    </lineage>
</organism>
<feature type="chain" id="PRO_0000334369" description="Na(+)/H(+) antiporter NhaA">
    <location>
        <begin position="1"/>
        <end position="395"/>
    </location>
</feature>
<feature type="transmembrane region" description="Helical" evidence="1">
    <location>
        <begin position="11"/>
        <end position="31"/>
    </location>
</feature>
<feature type="transmembrane region" description="Helical" evidence="1">
    <location>
        <begin position="61"/>
        <end position="81"/>
    </location>
</feature>
<feature type="transmembrane region" description="Helical" evidence="1">
    <location>
        <begin position="96"/>
        <end position="116"/>
    </location>
</feature>
<feature type="transmembrane region" description="Helical" evidence="1">
    <location>
        <begin position="127"/>
        <end position="147"/>
    </location>
</feature>
<feature type="transmembrane region" description="Helical" evidence="1">
    <location>
        <begin position="156"/>
        <end position="176"/>
    </location>
</feature>
<feature type="transmembrane region" description="Helical" evidence="1">
    <location>
        <begin position="179"/>
        <end position="199"/>
    </location>
</feature>
<feature type="transmembrane region" description="Helical" evidence="1">
    <location>
        <begin position="215"/>
        <end position="237"/>
    </location>
</feature>
<feature type="transmembrane region" description="Helical" evidence="1">
    <location>
        <begin position="262"/>
        <end position="282"/>
    </location>
</feature>
<feature type="transmembrane region" description="Helical" evidence="1">
    <location>
        <begin position="295"/>
        <end position="315"/>
    </location>
</feature>
<feature type="transmembrane region" description="Helical" evidence="1">
    <location>
        <begin position="334"/>
        <end position="354"/>
    </location>
</feature>
<feature type="transmembrane region" description="Helical" evidence="1">
    <location>
        <begin position="366"/>
        <end position="386"/>
    </location>
</feature>
<name>NHAA_PSEPF</name>
<dbReference type="EMBL" id="CP000094">
    <property type="protein sequence ID" value="ABA72977.1"/>
    <property type="molecule type" value="Genomic_DNA"/>
</dbReference>
<dbReference type="RefSeq" id="WP_011332790.1">
    <property type="nucleotide sequence ID" value="NC_007492.2"/>
</dbReference>
<dbReference type="SMR" id="Q3KGX9"/>
<dbReference type="KEGG" id="pfo:Pfl01_1234"/>
<dbReference type="eggNOG" id="COG3004">
    <property type="taxonomic scope" value="Bacteria"/>
</dbReference>
<dbReference type="HOGENOM" id="CLU_015803_1_0_6"/>
<dbReference type="Proteomes" id="UP000002704">
    <property type="component" value="Chromosome"/>
</dbReference>
<dbReference type="GO" id="GO:0005886">
    <property type="term" value="C:plasma membrane"/>
    <property type="evidence" value="ECO:0007669"/>
    <property type="project" value="UniProtKB-SubCell"/>
</dbReference>
<dbReference type="GO" id="GO:0015385">
    <property type="term" value="F:sodium:proton antiporter activity"/>
    <property type="evidence" value="ECO:0007669"/>
    <property type="project" value="TreeGrafter"/>
</dbReference>
<dbReference type="GO" id="GO:0006885">
    <property type="term" value="P:regulation of pH"/>
    <property type="evidence" value="ECO:0007669"/>
    <property type="project" value="InterPro"/>
</dbReference>
<dbReference type="Gene3D" id="1.20.1530.10">
    <property type="entry name" value="Na+/H+ antiporter like domain"/>
    <property type="match status" value="1"/>
</dbReference>
<dbReference type="HAMAP" id="MF_01844">
    <property type="entry name" value="NhaA"/>
    <property type="match status" value="1"/>
</dbReference>
<dbReference type="InterPro" id="IPR023171">
    <property type="entry name" value="Na/H_antiporter_dom_sf"/>
</dbReference>
<dbReference type="InterPro" id="IPR004670">
    <property type="entry name" value="NhaA"/>
</dbReference>
<dbReference type="NCBIfam" id="TIGR00773">
    <property type="entry name" value="NhaA"/>
    <property type="match status" value="1"/>
</dbReference>
<dbReference type="NCBIfam" id="NF007111">
    <property type="entry name" value="PRK09560.1"/>
    <property type="match status" value="1"/>
</dbReference>
<dbReference type="NCBIfam" id="NF007112">
    <property type="entry name" value="PRK09561.1"/>
    <property type="match status" value="1"/>
</dbReference>
<dbReference type="PANTHER" id="PTHR30341:SF0">
    <property type="entry name" value="NA(+)_H(+) ANTIPORTER NHAA"/>
    <property type="match status" value="1"/>
</dbReference>
<dbReference type="PANTHER" id="PTHR30341">
    <property type="entry name" value="SODIUM ION/PROTON ANTIPORTER NHAA-RELATED"/>
    <property type="match status" value="1"/>
</dbReference>
<dbReference type="Pfam" id="PF06965">
    <property type="entry name" value="Na_H_antiport_1"/>
    <property type="match status" value="1"/>
</dbReference>
<gene>
    <name evidence="1" type="primary">nhaA</name>
    <name type="ordered locus">Pfl01_1234</name>
</gene>
<evidence type="ECO:0000255" key="1">
    <source>
        <dbReference type="HAMAP-Rule" id="MF_01844"/>
    </source>
</evidence>
<reference key="1">
    <citation type="journal article" date="2009" name="Genome Biol.">
        <title>Genomic and genetic analyses of diversity and plant interactions of Pseudomonas fluorescens.</title>
        <authorList>
            <person name="Silby M.W."/>
            <person name="Cerdeno-Tarraga A.M."/>
            <person name="Vernikos G.S."/>
            <person name="Giddens S.R."/>
            <person name="Jackson R.W."/>
            <person name="Preston G.M."/>
            <person name="Zhang X.-X."/>
            <person name="Moon C.D."/>
            <person name="Gehrig S.M."/>
            <person name="Godfrey S.A.C."/>
            <person name="Knight C.G."/>
            <person name="Malone J.G."/>
            <person name="Robinson Z."/>
            <person name="Spiers A.J."/>
            <person name="Harris S."/>
            <person name="Challis G.L."/>
            <person name="Yaxley A.M."/>
            <person name="Harris D."/>
            <person name="Seeger K."/>
            <person name="Murphy L."/>
            <person name="Rutter S."/>
            <person name="Squares R."/>
            <person name="Quail M.A."/>
            <person name="Saunders E."/>
            <person name="Mavromatis K."/>
            <person name="Brettin T.S."/>
            <person name="Bentley S.D."/>
            <person name="Hothersall J."/>
            <person name="Stephens E."/>
            <person name="Thomas C.M."/>
            <person name="Parkhill J."/>
            <person name="Levy S.B."/>
            <person name="Rainey P.B."/>
            <person name="Thomson N.R."/>
        </authorList>
    </citation>
    <scope>NUCLEOTIDE SEQUENCE [LARGE SCALE GENOMIC DNA]</scope>
    <source>
        <strain>Pf0-1</strain>
    </source>
</reference>
<proteinExistence type="inferred from homology"/>
<accession>Q3KGX9</accession>
<protein>
    <recommendedName>
        <fullName evidence="1">Na(+)/H(+) antiporter NhaA</fullName>
    </recommendedName>
    <alternativeName>
        <fullName evidence="1">Sodium/proton antiporter NhaA</fullName>
    </alternativeName>
</protein>
<keyword id="KW-0050">Antiport</keyword>
<keyword id="KW-0997">Cell inner membrane</keyword>
<keyword id="KW-1003">Cell membrane</keyword>
<keyword id="KW-0406">Ion transport</keyword>
<keyword id="KW-0472">Membrane</keyword>
<keyword id="KW-0915">Sodium</keyword>
<keyword id="KW-0739">Sodium transport</keyword>
<keyword id="KW-0812">Transmembrane</keyword>
<keyword id="KW-1133">Transmembrane helix</keyword>
<keyword id="KW-0813">Transport</keyword>